<evidence type="ECO:0000250" key="1"/>
<evidence type="ECO:0000305" key="2"/>
<reference key="1">
    <citation type="journal article" date="2001" name="Nature">
        <title>Genome sequence of enterohaemorrhagic Escherichia coli O157:H7.</title>
        <authorList>
            <person name="Perna N.T."/>
            <person name="Plunkett G. III"/>
            <person name="Burland V."/>
            <person name="Mau B."/>
            <person name="Glasner J.D."/>
            <person name="Rose D.J."/>
            <person name="Mayhew G.F."/>
            <person name="Evans P.S."/>
            <person name="Gregor J."/>
            <person name="Kirkpatrick H.A."/>
            <person name="Posfai G."/>
            <person name="Hackett J."/>
            <person name="Klink S."/>
            <person name="Boutin A."/>
            <person name="Shao Y."/>
            <person name="Miller L."/>
            <person name="Grotbeck E.J."/>
            <person name="Davis N.W."/>
            <person name="Lim A."/>
            <person name="Dimalanta E.T."/>
            <person name="Potamousis K."/>
            <person name="Apodaca J."/>
            <person name="Anantharaman T.S."/>
            <person name="Lin J."/>
            <person name="Yen G."/>
            <person name="Schwartz D.C."/>
            <person name="Welch R.A."/>
            <person name="Blattner F.R."/>
        </authorList>
    </citation>
    <scope>NUCLEOTIDE SEQUENCE [LARGE SCALE GENOMIC DNA]</scope>
    <source>
        <strain>O157:H7 / EDL933 / ATCC 700927 / EHEC</strain>
    </source>
</reference>
<reference key="2">
    <citation type="journal article" date="2001" name="DNA Res.">
        <title>Complete genome sequence of enterohemorrhagic Escherichia coli O157:H7 and genomic comparison with a laboratory strain K-12.</title>
        <authorList>
            <person name="Hayashi T."/>
            <person name="Makino K."/>
            <person name="Ohnishi M."/>
            <person name="Kurokawa K."/>
            <person name="Ishii K."/>
            <person name="Yokoyama K."/>
            <person name="Han C.-G."/>
            <person name="Ohtsubo E."/>
            <person name="Nakayama K."/>
            <person name="Murata T."/>
            <person name="Tanaka M."/>
            <person name="Tobe T."/>
            <person name="Iida T."/>
            <person name="Takami H."/>
            <person name="Honda T."/>
            <person name="Sasakawa C."/>
            <person name="Ogasawara N."/>
            <person name="Yasunaga T."/>
            <person name="Kuhara S."/>
            <person name="Shiba T."/>
            <person name="Hattori M."/>
            <person name="Shinagawa H."/>
        </authorList>
    </citation>
    <scope>NUCLEOTIDE SEQUENCE [LARGE SCALE GENOMIC DNA]</scope>
    <source>
        <strain>O157:H7 / Sakai / RIMD 0509952 / EHEC</strain>
    </source>
</reference>
<feature type="chain" id="PRO_0000341659" description="S-formylglutathione hydrolase FrmB">
    <location>
        <begin position="1"/>
        <end position="277"/>
    </location>
</feature>
<feature type="active site" description="Charge relay system" evidence="1">
    <location>
        <position position="145"/>
    </location>
</feature>
<feature type="active site" description="Charge relay system" evidence="1">
    <location>
        <position position="221"/>
    </location>
</feature>
<feature type="active site" description="Charge relay system" evidence="1">
    <location>
        <position position="254"/>
    </location>
</feature>
<dbReference type="EC" id="3.1.2.12"/>
<dbReference type="EMBL" id="AE005174">
    <property type="protein sequence ID" value="AAG54706.1"/>
    <property type="molecule type" value="Genomic_DNA"/>
</dbReference>
<dbReference type="EMBL" id="BA000007">
    <property type="protein sequence ID" value="BAB33833.1"/>
    <property type="molecule type" value="Genomic_DNA"/>
</dbReference>
<dbReference type="PIR" id="B90680">
    <property type="entry name" value="B90680"/>
</dbReference>
<dbReference type="PIR" id="F85530">
    <property type="entry name" value="F85530"/>
</dbReference>
<dbReference type="RefSeq" id="NP_308437.1">
    <property type="nucleotide sequence ID" value="NC_002695.1"/>
</dbReference>
<dbReference type="SMR" id="Q8X5J5"/>
<dbReference type="STRING" id="155864.Z0455"/>
<dbReference type="ESTHER" id="ecoli-yaim">
    <property type="family name" value="A85-EsteraseD-FGH"/>
</dbReference>
<dbReference type="MEROPS" id="S09.940"/>
<dbReference type="GeneID" id="914512"/>
<dbReference type="KEGG" id="ece:Z0455"/>
<dbReference type="KEGG" id="ecs:ECs_0410"/>
<dbReference type="PATRIC" id="fig|386585.9.peg.505"/>
<dbReference type="eggNOG" id="COG0627">
    <property type="taxonomic scope" value="Bacteria"/>
</dbReference>
<dbReference type="HOGENOM" id="CLU_056472_0_0_6"/>
<dbReference type="OMA" id="GWQDVYQ"/>
<dbReference type="Proteomes" id="UP000000558">
    <property type="component" value="Chromosome"/>
</dbReference>
<dbReference type="Proteomes" id="UP000002519">
    <property type="component" value="Chromosome"/>
</dbReference>
<dbReference type="GO" id="GO:0005829">
    <property type="term" value="C:cytosol"/>
    <property type="evidence" value="ECO:0007669"/>
    <property type="project" value="TreeGrafter"/>
</dbReference>
<dbReference type="GO" id="GO:0052689">
    <property type="term" value="F:carboxylic ester hydrolase activity"/>
    <property type="evidence" value="ECO:0007669"/>
    <property type="project" value="UniProtKB-KW"/>
</dbReference>
<dbReference type="GO" id="GO:0018738">
    <property type="term" value="F:S-formylglutathione hydrolase activity"/>
    <property type="evidence" value="ECO:0007669"/>
    <property type="project" value="UniProtKB-EC"/>
</dbReference>
<dbReference type="GO" id="GO:0046294">
    <property type="term" value="P:formaldehyde catabolic process"/>
    <property type="evidence" value="ECO:0007669"/>
    <property type="project" value="InterPro"/>
</dbReference>
<dbReference type="FunFam" id="3.40.50.1820:FF:000002">
    <property type="entry name" value="S-formylglutathione hydrolase"/>
    <property type="match status" value="1"/>
</dbReference>
<dbReference type="Gene3D" id="3.40.50.1820">
    <property type="entry name" value="alpha/beta hydrolase"/>
    <property type="match status" value="1"/>
</dbReference>
<dbReference type="InterPro" id="IPR029058">
    <property type="entry name" value="AB_hydrolase_fold"/>
</dbReference>
<dbReference type="InterPro" id="IPR000801">
    <property type="entry name" value="Esterase-like"/>
</dbReference>
<dbReference type="InterPro" id="IPR014186">
    <property type="entry name" value="S-formylglutathione_hydrol"/>
</dbReference>
<dbReference type="NCBIfam" id="TIGR02821">
    <property type="entry name" value="fghA_ester_D"/>
    <property type="match status" value="1"/>
</dbReference>
<dbReference type="PANTHER" id="PTHR10061">
    <property type="entry name" value="S-FORMYLGLUTATHIONE HYDROLASE"/>
    <property type="match status" value="1"/>
</dbReference>
<dbReference type="PANTHER" id="PTHR10061:SF0">
    <property type="entry name" value="S-FORMYLGLUTATHIONE HYDROLASE"/>
    <property type="match status" value="1"/>
</dbReference>
<dbReference type="Pfam" id="PF00756">
    <property type="entry name" value="Esterase"/>
    <property type="match status" value="1"/>
</dbReference>
<dbReference type="SUPFAM" id="SSF53474">
    <property type="entry name" value="alpha/beta-Hydrolases"/>
    <property type="match status" value="1"/>
</dbReference>
<accession>Q8X5J5</accession>
<accession>Q7AH46</accession>
<protein>
    <recommendedName>
        <fullName>S-formylglutathione hydrolase FrmB</fullName>
        <shortName>FGH</shortName>
        <ecNumber>3.1.2.12</ecNumber>
    </recommendedName>
</protein>
<organism>
    <name type="scientific">Escherichia coli O157:H7</name>
    <dbReference type="NCBI Taxonomy" id="83334"/>
    <lineage>
        <taxon>Bacteria</taxon>
        <taxon>Pseudomonadati</taxon>
        <taxon>Pseudomonadota</taxon>
        <taxon>Gammaproteobacteria</taxon>
        <taxon>Enterobacterales</taxon>
        <taxon>Enterobacteriaceae</taxon>
        <taxon>Escherichia</taxon>
    </lineage>
</organism>
<name>SFGH1_ECO57</name>
<gene>
    <name type="primary">frmB</name>
    <name type="ordered locus">Z0455</name>
    <name type="ordered locus">ECs0410</name>
</gene>
<sequence length="277" mass="31248">MELIEKHASFGGWQNVYRHYSASLKCEMNVGVYLPPKAAGEKLPVLYWLSGLTCNEQNFITKSGVQRYAAEHNIIVVAPDTSPRGSHVADADRYDLGQGAGFYLNATQAPWNEHYKMYDYIRNELPDLVMNHFPATAKKSISGHSMGGLGALVLALRNPDEYVSVSAFSPIVSPSQVPWGQQAFAAYLGENKEAWLDYHPVSLISQGQRVAEIMVDQGLSDDFYAEQLRTQNLEKICQEMNIKTLIRYHEGYDHSYYFVSSFIGEHIAYHANKLNMR</sequence>
<comment type="function">
    <text evidence="1">Serine hydrolase involved in the detoxification of formaldehyde. Hydrolyzes S-formylglutathione to glutathione and formate (By similarity).</text>
</comment>
<comment type="catalytic activity">
    <reaction>
        <text>S-formylglutathione + H2O = formate + glutathione + H(+)</text>
        <dbReference type="Rhea" id="RHEA:14961"/>
        <dbReference type="ChEBI" id="CHEBI:15377"/>
        <dbReference type="ChEBI" id="CHEBI:15378"/>
        <dbReference type="ChEBI" id="CHEBI:15740"/>
        <dbReference type="ChEBI" id="CHEBI:57688"/>
        <dbReference type="ChEBI" id="CHEBI:57925"/>
        <dbReference type="EC" id="3.1.2.12"/>
    </reaction>
</comment>
<comment type="similarity">
    <text evidence="2">Belongs to the esterase D family.</text>
</comment>
<keyword id="KW-0378">Hydrolase</keyword>
<keyword id="KW-1185">Reference proteome</keyword>
<keyword id="KW-0719">Serine esterase</keyword>
<proteinExistence type="inferred from homology"/>